<proteinExistence type="predicted"/>
<feature type="chain" id="PRO_0000164833" description="Gene 87 protein">
    <location>
        <begin position="1"/>
        <end position="53"/>
    </location>
</feature>
<organism>
    <name type="scientific">Mycobacterium phage L5</name>
    <name type="common">Mycobacteriophage L5</name>
    <dbReference type="NCBI Taxonomy" id="31757"/>
    <lineage>
        <taxon>Viruses</taxon>
        <taxon>Duplodnaviria</taxon>
        <taxon>Heunggongvirae</taxon>
        <taxon>Uroviricota</taxon>
        <taxon>Caudoviricetes</taxon>
        <taxon>Fromanvirus</taxon>
    </lineage>
</organism>
<name>VG87_BPML5</name>
<reference key="1">
    <citation type="journal article" date="1993" name="Mol. Microbiol.">
        <title>DNA sequence, structure and gene expression of mycobacteriophage L5: a phage system for mycobacterial genetics.</title>
        <authorList>
            <person name="Hatfull G.F."/>
            <person name="Sarkis G.J."/>
        </authorList>
    </citation>
    <scope>NUCLEOTIDE SEQUENCE [LARGE SCALE GENOMIC DNA]</scope>
</reference>
<protein>
    <recommendedName>
        <fullName>Gene 87 protein</fullName>
    </recommendedName>
    <alternativeName>
        <fullName>Gp87</fullName>
    </alternativeName>
</protein>
<organismHost>
    <name type="scientific">Mycobacterium</name>
    <dbReference type="NCBI Taxonomy" id="1763"/>
</organismHost>
<accession>Q05304</accession>
<keyword id="KW-1185">Reference proteome</keyword>
<dbReference type="EMBL" id="Z18946">
    <property type="protein sequence ID" value="CAA79463.1"/>
    <property type="molecule type" value="Genomic_DNA"/>
</dbReference>
<dbReference type="PIR" id="S31032">
    <property type="entry name" value="S31032"/>
</dbReference>
<dbReference type="RefSeq" id="NP_039751.1">
    <property type="nucleotide sequence ID" value="NC_001335.1"/>
</dbReference>
<dbReference type="GeneID" id="2942922"/>
<dbReference type="KEGG" id="vg:2942922"/>
<dbReference type="OrthoDB" id="25019at10239"/>
<dbReference type="Proteomes" id="UP000002123">
    <property type="component" value="Genome"/>
</dbReference>
<dbReference type="InterPro" id="IPR039451">
    <property type="entry name" value="DUF5419"/>
</dbReference>
<dbReference type="Pfam" id="PF17441">
    <property type="entry name" value="DUF5419"/>
    <property type="match status" value="1"/>
</dbReference>
<sequence length="53" mass="6215">MSFETWMAALDGYMTETFGLGYQDIADWTYRDAYDDGLTFREAAHRAINHEFL</sequence>
<gene>
    <name type="primary">87</name>
</gene>